<dbReference type="EMBL" id="CP000863">
    <property type="protein sequence ID" value="ACC58588.1"/>
    <property type="molecule type" value="Genomic_DNA"/>
</dbReference>
<dbReference type="RefSeq" id="WP_001058538.1">
    <property type="nucleotide sequence ID" value="NZ_CP031380.1"/>
</dbReference>
<dbReference type="SMR" id="B2HZM0"/>
<dbReference type="GeneID" id="92895315"/>
<dbReference type="KEGG" id="abc:ACICU_03278"/>
<dbReference type="HOGENOM" id="CLU_037562_3_1_6"/>
<dbReference type="Proteomes" id="UP000008839">
    <property type="component" value="Chromosome"/>
</dbReference>
<dbReference type="GO" id="GO:1990904">
    <property type="term" value="C:ribonucleoprotein complex"/>
    <property type="evidence" value="ECO:0007669"/>
    <property type="project" value="UniProtKB-KW"/>
</dbReference>
<dbReference type="GO" id="GO:0005840">
    <property type="term" value="C:ribosome"/>
    <property type="evidence" value="ECO:0007669"/>
    <property type="project" value="UniProtKB-KW"/>
</dbReference>
<dbReference type="GO" id="GO:0019843">
    <property type="term" value="F:rRNA binding"/>
    <property type="evidence" value="ECO:0007669"/>
    <property type="project" value="UniProtKB-UniRule"/>
</dbReference>
<dbReference type="GO" id="GO:0003735">
    <property type="term" value="F:structural constituent of ribosome"/>
    <property type="evidence" value="ECO:0007669"/>
    <property type="project" value="InterPro"/>
</dbReference>
<dbReference type="GO" id="GO:0006412">
    <property type="term" value="P:translation"/>
    <property type="evidence" value="ECO:0007669"/>
    <property type="project" value="UniProtKB-UniRule"/>
</dbReference>
<dbReference type="FunFam" id="3.30.70.330:FF:000001">
    <property type="entry name" value="50S ribosomal protein L23"/>
    <property type="match status" value="1"/>
</dbReference>
<dbReference type="Gene3D" id="3.30.70.330">
    <property type="match status" value="1"/>
</dbReference>
<dbReference type="HAMAP" id="MF_01369_B">
    <property type="entry name" value="Ribosomal_uL23_B"/>
    <property type="match status" value="1"/>
</dbReference>
<dbReference type="InterPro" id="IPR012677">
    <property type="entry name" value="Nucleotide-bd_a/b_plait_sf"/>
</dbReference>
<dbReference type="InterPro" id="IPR013025">
    <property type="entry name" value="Ribosomal_uL23-like"/>
</dbReference>
<dbReference type="InterPro" id="IPR012678">
    <property type="entry name" value="Ribosomal_uL23/eL15/eS24_sf"/>
</dbReference>
<dbReference type="NCBIfam" id="NF004359">
    <property type="entry name" value="PRK05738.1-3"/>
    <property type="match status" value="1"/>
</dbReference>
<dbReference type="NCBIfam" id="NF004363">
    <property type="entry name" value="PRK05738.2-4"/>
    <property type="match status" value="1"/>
</dbReference>
<dbReference type="PANTHER" id="PTHR11620">
    <property type="entry name" value="60S RIBOSOMAL PROTEIN L23A"/>
    <property type="match status" value="1"/>
</dbReference>
<dbReference type="Pfam" id="PF00276">
    <property type="entry name" value="Ribosomal_L23"/>
    <property type="match status" value="1"/>
</dbReference>
<dbReference type="SUPFAM" id="SSF54189">
    <property type="entry name" value="Ribosomal proteins S24e, L23 and L15e"/>
    <property type="match status" value="1"/>
</dbReference>
<gene>
    <name evidence="1" type="primary">rplW</name>
    <name type="ordered locus">ACICU_03278</name>
</gene>
<organism>
    <name type="scientific">Acinetobacter baumannii (strain ACICU)</name>
    <dbReference type="NCBI Taxonomy" id="405416"/>
    <lineage>
        <taxon>Bacteria</taxon>
        <taxon>Pseudomonadati</taxon>
        <taxon>Pseudomonadota</taxon>
        <taxon>Gammaproteobacteria</taxon>
        <taxon>Moraxellales</taxon>
        <taxon>Moraxellaceae</taxon>
        <taxon>Acinetobacter</taxon>
        <taxon>Acinetobacter calcoaceticus/baumannii complex</taxon>
    </lineage>
</organism>
<feature type="chain" id="PRO_1000144517" description="Large ribosomal subunit protein uL23">
    <location>
        <begin position="1"/>
        <end position="106"/>
    </location>
</feature>
<reference key="1">
    <citation type="journal article" date="2008" name="Antimicrob. Agents Chemother.">
        <title>Whole-genome pyrosequencing of an epidemic multidrug-resistant Acinetobacter baumannii strain belonging to the European clone II group.</title>
        <authorList>
            <person name="Iacono M."/>
            <person name="Villa L."/>
            <person name="Fortini D."/>
            <person name="Bordoni R."/>
            <person name="Imperi F."/>
            <person name="Bonnal R.J."/>
            <person name="Sicheritz-Ponten T."/>
            <person name="De Bellis G."/>
            <person name="Visca P."/>
            <person name="Cassone A."/>
            <person name="Carattoli A."/>
        </authorList>
    </citation>
    <scope>NUCLEOTIDE SEQUENCE [LARGE SCALE GENOMIC DNA]</scope>
    <source>
        <strain>ACICU</strain>
    </source>
</reference>
<accession>B2HZM0</accession>
<comment type="function">
    <text evidence="1">One of the early assembly proteins it binds 23S rRNA. One of the proteins that surrounds the polypeptide exit tunnel on the outside of the ribosome. Forms the main docking site for trigger factor binding to the ribosome.</text>
</comment>
<comment type="subunit">
    <text evidence="1">Part of the 50S ribosomal subunit. Contacts protein L29, and trigger factor when it is bound to the ribosome.</text>
</comment>
<comment type="similarity">
    <text evidence="1">Belongs to the universal ribosomal protein uL23 family.</text>
</comment>
<protein>
    <recommendedName>
        <fullName evidence="1">Large ribosomal subunit protein uL23</fullName>
    </recommendedName>
    <alternativeName>
        <fullName evidence="2">50S ribosomal protein L23</fullName>
    </alternativeName>
</protein>
<evidence type="ECO:0000255" key="1">
    <source>
        <dbReference type="HAMAP-Rule" id="MF_01369"/>
    </source>
</evidence>
<evidence type="ECO:0000305" key="2"/>
<sequence>MNNERIYQVLKGPVFSEKAQVLGDTAGVQVFKVDINATKLEIKKAVEKLFGVEVVKVNTTITKGKTKRFGRTLGRRSDVKKAYVTLKAGQDVEMADLGDTAESAAE</sequence>
<proteinExistence type="inferred from homology"/>
<keyword id="KW-0687">Ribonucleoprotein</keyword>
<keyword id="KW-0689">Ribosomal protein</keyword>
<keyword id="KW-0694">RNA-binding</keyword>
<keyword id="KW-0699">rRNA-binding</keyword>
<name>RL23_ACIBC</name>